<name>G3P1_STAAS</name>
<sequence>MAVKVAINGFGRIGRLAFRRIQEVEGLEVVAVNDLTDDDMLAHLLKYDTMQGRFTGEVEVVDGGFRVNGKEVKSFSEPDASKLPWKDLNIDVVLECTGFYTDKDKAQAHIEAGAKKVLISAPATGDLKTIVFNTNHQELDGSETVVSGASCTTNSLAPVAKVLNDDFGLVEGLMTTIHAYTGDQNTQDAPHRKGDKRRARAAAENIIPNSTGAAKAIGKVIPEIDGKLDGGAQRVPVATGSLTELTVVLEKQDVTVEQVNEAMKNASNESFGYTEDEIVSSDVVGMTYGSLFDATQTRVMSVGDRQLVKVAAWYDNEMSYTAQLVRTLAYLAELSK</sequence>
<reference key="1">
    <citation type="journal article" date="2004" name="Proc. Natl. Acad. Sci. U.S.A.">
        <title>Complete genomes of two clinical Staphylococcus aureus strains: evidence for the rapid evolution of virulence and drug resistance.</title>
        <authorList>
            <person name="Holden M.T.G."/>
            <person name="Feil E.J."/>
            <person name="Lindsay J.A."/>
            <person name="Peacock S.J."/>
            <person name="Day N.P.J."/>
            <person name="Enright M.C."/>
            <person name="Foster T.J."/>
            <person name="Moore C.E."/>
            <person name="Hurst L."/>
            <person name="Atkin R."/>
            <person name="Barron A."/>
            <person name="Bason N."/>
            <person name="Bentley S.D."/>
            <person name="Chillingworth C."/>
            <person name="Chillingworth T."/>
            <person name="Churcher C."/>
            <person name="Clark L."/>
            <person name="Corton C."/>
            <person name="Cronin A."/>
            <person name="Doggett J."/>
            <person name="Dowd L."/>
            <person name="Feltwell T."/>
            <person name="Hance Z."/>
            <person name="Harris B."/>
            <person name="Hauser H."/>
            <person name="Holroyd S."/>
            <person name="Jagels K."/>
            <person name="James K.D."/>
            <person name="Lennard N."/>
            <person name="Line A."/>
            <person name="Mayes R."/>
            <person name="Moule S."/>
            <person name="Mungall K."/>
            <person name="Ormond D."/>
            <person name="Quail M.A."/>
            <person name="Rabbinowitsch E."/>
            <person name="Rutherford K.M."/>
            <person name="Sanders M."/>
            <person name="Sharp S."/>
            <person name="Simmonds M."/>
            <person name="Stevens K."/>
            <person name="Whitehead S."/>
            <person name="Barrell B.G."/>
            <person name="Spratt B.G."/>
            <person name="Parkhill J."/>
        </authorList>
    </citation>
    <scope>NUCLEOTIDE SEQUENCE [LARGE SCALE GENOMIC DNA]</scope>
    <source>
        <strain>MSSA476</strain>
    </source>
</reference>
<comment type="function">
    <text evidence="2">Catalyzes the oxidative phosphorylation of glyceraldehyde 3-phosphate (G3P) to 1,3-bisphosphoglycerate (BPG) using the cofactor NAD. The first reaction step involves the formation of a hemiacetal intermediate between G3P and a cysteine residue, and this hemiacetal intermediate is then oxidized to a thioester, with concomitant reduction of NAD to NADH. The reduced NADH is then exchanged with the second NAD, and the thioester is attacked by a nucleophilic inorganic phosphate to produce BPG.</text>
</comment>
<comment type="catalytic activity">
    <reaction evidence="2">
        <text>D-glyceraldehyde 3-phosphate + phosphate + NAD(+) = (2R)-3-phospho-glyceroyl phosphate + NADH + H(+)</text>
        <dbReference type="Rhea" id="RHEA:10300"/>
        <dbReference type="ChEBI" id="CHEBI:15378"/>
        <dbReference type="ChEBI" id="CHEBI:43474"/>
        <dbReference type="ChEBI" id="CHEBI:57540"/>
        <dbReference type="ChEBI" id="CHEBI:57604"/>
        <dbReference type="ChEBI" id="CHEBI:57945"/>
        <dbReference type="ChEBI" id="CHEBI:59776"/>
        <dbReference type="EC" id="1.2.1.12"/>
    </reaction>
</comment>
<comment type="pathway">
    <text evidence="3">Carbohydrate degradation; glycolysis; pyruvate from D-glyceraldehyde 3-phosphate: step 1/5.</text>
</comment>
<comment type="subunit">
    <text evidence="2">Homotetramer.</text>
</comment>
<comment type="subcellular location">
    <subcellularLocation>
        <location evidence="3">Cytoplasm</location>
    </subcellularLocation>
</comment>
<comment type="similarity">
    <text evidence="3">Belongs to the glyceraldehyde-3-phosphate dehydrogenase family.</text>
</comment>
<evidence type="ECO:0000250" key="1">
    <source>
        <dbReference type="UniProtKB" id="P00362"/>
    </source>
</evidence>
<evidence type="ECO:0000250" key="2">
    <source>
        <dbReference type="UniProtKB" id="Q6GIL8"/>
    </source>
</evidence>
<evidence type="ECO:0000305" key="3"/>
<feature type="chain" id="PRO_0000145686" description="Glyceraldehyde-3-phosphate dehydrogenase 1">
    <location>
        <begin position="1"/>
        <end position="336"/>
    </location>
</feature>
<feature type="active site" description="Nucleophile" evidence="2">
    <location>
        <position position="151"/>
    </location>
</feature>
<feature type="binding site" evidence="2">
    <location>
        <begin position="12"/>
        <end position="13"/>
    </location>
    <ligand>
        <name>NAD(+)</name>
        <dbReference type="ChEBI" id="CHEBI:57540"/>
    </ligand>
</feature>
<feature type="binding site" evidence="2">
    <location>
        <position position="34"/>
    </location>
    <ligand>
        <name>NAD(+)</name>
        <dbReference type="ChEBI" id="CHEBI:57540"/>
    </ligand>
</feature>
<feature type="binding site" evidence="2">
    <location>
        <position position="120"/>
    </location>
    <ligand>
        <name>NAD(+)</name>
        <dbReference type="ChEBI" id="CHEBI:57540"/>
    </ligand>
</feature>
<feature type="binding site" evidence="2">
    <location>
        <begin position="150"/>
        <end position="152"/>
    </location>
    <ligand>
        <name>D-glyceraldehyde 3-phosphate</name>
        <dbReference type="ChEBI" id="CHEBI:59776"/>
    </ligand>
</feature>
<feature type="binding site" evidence="2">
    <location>
        <position position="181"/>
    </location>
    <ligand>
        <name>D-glyceraldehyde 3-phosphate</name>
        <dbReference type="ChEBI" id="CHEBI:59776"/>
    </ligand>
</feature>
<feature type="binding site" evidence="1">
    <location>
        <position position="198"/>
    </location>
    <ligand>
        <name>D-glyceraldehyde 3-phosphate</name>
        <dbReference type="ChEBI" id="CHEBI:59776"/>
    </ligand>
</feature>
<feature type="binding site" evidence="2">
    <location>
        <begin position="211"/>
        <end position="212"/>
    </location>
    <ligand>
        <name>D-glyceraldehyde 3-phosphate</name>
        <dbReference type="ChEBI" id="CHEBI:59776"/>
    </ligand>
</feature>
<feature type="binding site" evidence="2">
    <location>
        <position position="234"/>
    </location>
    <ligand>
        <name>D-glyceraldehyde 3-phosphate</name>
        <dbReference type="ChEBI" id="CHEBI:59776"/>
    </ligand>
</feature>
<feature type="binding site" evidence="2">
    <location>
        <position position="316"/>
    </location>
    <ligand>
        <name>NAD(+)</name>
        <dbReference type="ChEBI" id="CHEBI:57540"/>
    </ligand>
</feature>
<feature type="site" description="Activates thiol group during catalysis" evidence="2">
    <location>
        <position position="178"/>
    </location>
</feature>
<keyword id="KW-0963">Cytoplasm</keyword>
<keyword id="KW-0324">Glycolysis</keyword>
<keyword id="KW-0520">NAD</keyword>
<keyword id="KW-0547">Nucleotide-binding</keyword>
<keyword id="KW-0560">Oxidoreductase</keyword>
<organism>
    <name type="scientific">Staphylococcus aureus (strain MSSA476)</name>
    <dbReference type="NCBI Taxonomy" id="282459"/>
    <lineage>
        <taxon>Bacteria</taxon>
        <taxon>Bacillati</taxon>
        <taxon>Bacillota</taxon>
        <taxon>Bacilli</taxon>
        <taxon>Bacillales</taxon>
        <taxon>Staphylococcaceae</taxon>
        <taxon>Staphylococcus</taxon>
    </lineage>
</organism>
<protein>
    <recommendedName>
        <fullName evidence="2">Glyceraldehyde-3-phosphate dehydrogenase 1</fullName>
        <shortName evidence="2">GAPDH 1</shortName>
        <ecNumber evidence="2">1.2.1.12</ecNumber>
    </recommendedName>
    <alternativeName>
        <fullName evidence="2">NAD-dependent glyceraldehyde-3-phosphate dehydrogenase</fullName>
    </alternativeName>
</protein>
<dbReference type="EC" id="1.2.1.12" evidence="2"/>
<dbReference type="EMBL" id="BX571857">
    <property type="protein sequence ID" value="CAG42513.1"/>
    <property type="molecule type" value="Genomic_DNA"/>
</dbReference>
<dbReference type="RefSeq" id="WP_000279414.1">
    <property type="nucleotide sequence ID" value="NC_002953.3"/>
</dbReference>
<dbReference type="SMR" id="Q6GB58"/>
<dbReference type="KEGG" id="sas:SAS0738"/>
<dbReference type="HOGENOM" id="CLU_030140_0_0_9"/>
<dbReference type="UniPathway" id="UPA00109">
    <property type="reaction ID" value="UER00184"/>
</dbReference>
<dbReference type="GO" id="GO:0005737">
    <property type="term" value="C:cytoplasm"/>
    <property type="evidence" value="ECO:0007669"/>
    <property type="project" value="UniProtKB-SubCell"/>
</dbReference>
<dbReference type="GO" id="GO:0004365">
    <property type="term" value="F:glyceraldehyde-3-phosphate dehydrogenase (NAD+) (phosphorylating) activity"/>
    <property type="evidence" value="ECO:0000250"/>
    <property type="project" value="UniProtKB"/>
</dbReference>
<dbReference type="GO" id="GO:0051287">
    <property type="term" value="F:NAD binding"/>
    <property type="evidence" value="ECO:0000250"/>
    <property type="project" value="UniProtKB"/>
</dbReference>
<dbReference type="GO" id="GO:0050661">
    <property type="term" value="F:NADP binding"/>
    <property type="evidence" value="ECO:0007669"/>
    <property type="project" value="InterPro"/>
</dbReference>
<dbReference type="GO" id="GO:0006006">
    <property type="term" value="P:glucose metabolic process"/>
    <property type="evidence" value="ECO:0007669"/>
    <property type="project" value="InterPro"/>
</dbReference>
<dbReference type="GO" id="GO:0006096">
    <property type="term" value="P:glycolytic process"/>
    <property type="evidence" value="ECO:0007669"/>
    <property type="project" value="UniProtKB-UniPathway"/>
</dbReference>
<dbReference type="CDD" id="cd18126">
    <property type="entry name" value="GAPDH_I_C"/>
    <property type="match status" value="1"/>
</dbReference>
<dbReference type="CDD" id="cd05214">
    <property type="entry name" value="GAPDH_I_N"/>
    <property type="match status" value="1"/>
</dbReference>
<dbReference type="FunFam" id="3.30.360.10:FF:000002">
    <property type="entry name" value="Glyceraldehyde-3-phosphate dehydrogenase"/>
    <property type="match status" value="1"/>
</dbReference>
<dbReference type="FunFam" id="3.40.50.720:FF:000001">
    <property type="entry name" value="Glyceraldehyde-3-phosphate dehydrogenase"/>
    <property type="match status" value="1"/>
</dbReference>
<dbReference type="Gene3D" id="3.30.360.10">
    <property type="entry name" value="Dihydrodipicolinate Reductase, domain 2"/>
    <property type="match status" value="1"/>
</dbReference>
<dbReference type="Gene3D" id="3.40.50.720">
    <property type="entry name" value="NAD(P)-binding Rossmann-like Domain"/>
    <property type="match status" value="1"/>
</dbReference>
<dbReference type="InterPro" id="IPR020831">
    <property type="entry name" value="GlycerAld/Erythrose_P_DH"/>
</dbReference>
<dbReference type="InterPro" id="IPR020830">
    <property type="entry name" value="GlycerAld_3-P_DH_AS"/>
</dbReference>
<dbReference type="InterPro" id="IPR020829">
    <property type="entry name" value="GlycerAld_3-P_DH_cat"/>
</dbReference>
<dbReference type="InterPro" id="IPR020828">
    <property type="entry name" value="GlycerAld_3-P_DH_NAD(P)-bd"/>
</dbReference>
<dbReference type="InterPro" id="IPR006424">
    <property type="entry name" value="Glyceraldehyde-3-P_DH_1"/>
</dbReference>
<dbReference type="InterPro" id="IPR036291">
    <property type="entry name" value="NAD(P)-bd_dom_sf"/>
</dbReference>
<dbReference type="NCBIfam" id="TIGR01534">
    <property type="entry name" value="GAPDH-I"/>
    <property type="match status" value="1"/>
</dbReference>
<dbReference type="PANTHER" id="PTHR43148">
    <property type="entry name" value="GLYCERALDEHYDE-3-PHOSPHATE DEHYDROGENASE 2"/>
    <property type="match status" value="1"/>
</dbReference>
<dbReference type="Pfam" id="PF02800">
    <property type="entry name" value="Gp_dh_C"/>
    <property type="match status" value="1"/>
</dbReference>
<dbReference type="Pfam" id="PF00044">
    <property type="entry name" value="Gp_dh_N"/>
    <property type="match status" value="1"/>
</dbReference>
<dbReference type="PIRSF" id="PIRSF000149">
    <property type="entry name" value="GAP_DH"/>
    <property type="match status" value="1"/>
</dbReference>
<dbReference type="PRINTS" id="PR00078">
    <property type="entry name" value="G3PDHDRGNASE"/>
</dbReference>
<dbReference type="SMART" id="SM00846">
    <property type="entry name" value="Gp_dh_N"/>
    <property type="match status" value="1"/>
</dbReference>
<dbReference type="SUPFAM" id="SSF55347">
    <property type="entry name" value="Glyceraldehyde-3-phosphate dehydrogenase-like, C-terminal domain"/>
    <property type="match status" value="1"/>
</dbReference>
<dbReference type="SUPFAM" id="SSF51735">
    <property type="entry name" value="NAD(P)-binding Rossmann-fold domains"/>
    <property type="match status" value="1"/>
</dbReference>
<dbReference type="PROSITE" id="PS00071">
    <property type="entry name" value="GAPDH"/>
    <property type="match status" value="1"/>
</dbReference>
<gene>
    <name type="primary">gapA1</name>
    <name type="synonym">gap</name>
    <name type="synonym">gapA</name>
    <name type="ordered locus">SAS0738</name>
</gene>
<proteinExistence type="inferred from homology"/>
<accession>Q6GB58</accession>